<protein>
    <recommendedName>
        <fullName>Probable arabinan endo-1,5-alpha-L-arabinosidase C</fullName>
        <ecNumber>3.2.1.99</ecNumber>
    </recommendedName>
    <alternativeName>
        <fullName>Endo-1,5-alpha-L-arabinanase C</fullName>
        <shortName>ABN C</shortName>
    </alternativeName>
</protein>
<reference key="1">
    <citation type="journal article" date="2008" name="PLoS Genet.">
        <title>Genomic islands in the pathogenic filamentous fungus Aspergillus fumigatus.</title>
        <authorList>
            <person name="Fedorova N.D."/>
            <person name="Khaldi N."/>
            <person name="Joardar V.S."/>
            <person name="Maiti R."/>
            <person name="Amedeo P."/>
            <person name="Anderson M.J."/>
            <person name="Crabtree J."/>
            <person name="Silva J.C."/>
            <person name="Badger J.H."/>
            <person name="Albarraq A."/>
            <person name="Angiuoli S."/>
            <person name="Bussey H."/>
            <person name="Bowyer P."/>
            <person name="Cotty P.J."/>
            <person name="Dyer P.S."/>
            <person name="Egan A."/>
            <person name="Galens K."/>
            <person name="Fraser-Liggett C.M."/>
            <person name="Haas B.J."/>
            <person name="Inman J.M."/>
            <person name="Kent R."/>
            <person name="Lemieux S."/>
            <person name="Malavazi I."/>
            <person name="Orvis J."/>
            <person name="Roemer T."/>
            <person name="Ronning C.M."/>
            <person name="Sundaram J.P."/>
            <person name="Sutton G."/>
            <person name="Turner G."/>
            <person name="Venter J.C."/>
            <person name="White O.R."/>
            <person name="Whitty B.R."/>
            <person name="Youngman P."/>
            <person name="Wolfe K.H."/>
            <person name="Goldman G.H."/>
            <person name="Wortman J.R."/>
            <person name="Jiang B."/>
            <person name="Denning D.W."/>
            <person name="Nierman W.C."/>
        </authorList>
    </citation>
    <scope>NUCLEOTIDE SEQUENCE [LARGE SCALE GENOMIC DNA]</scope>
    <source>
        <strain>CBS 144.89 / FGSC A1163 / CEA10</strain>
    </source>
</reference>
<dbReference type="EC" id="3.2.1.99"/>
<dbReference type="EMBL" id="DS499602">
    <property type="protein sequence ID" value="EDP47817.1"/>
    <property type="status" value="ALT_SEQ"/>
    <property type="molecule type" value="Genomic_DNA"/>
</dbReference>
<dbReference type="SMR" id="B0YDT3"/>
<dbReference type="GlyCosmos" id="B0YDT3">
    <property type="glycosylation" value="2 sites, No reported glycans"/>
</dbReference>
<dbReference type="OrthoDB" id="2625at5052"/>
<dbReference type="PhylomeDB" id="B0YDT3"/>
<dbReference type="UniPathway" id="UPA00667"/>
<dbReference type="Proteomes" id="UP000001699">
    <property type="component" value="Unassembled WGS sequence"/>
</dbReference>
<dbReference type="GO" id="GO:0005576">
    <property type="term" value="C:extracellular region"/>
    <property type="evidence" value="ECO:0007669"/>
    <property type="project" value="UniProtKB-SubCell"/>
</dbReference>
<dbReference type="GO" id="GO:0046558">
    <property type="term" value="F:arabinan endo-1,5-alpha-L-arabinosidase activity"/>
    <property type="evidence" value="ECO:0007669"/>
    <property type="project" value="UniProtKB-EC"/>
</dbReference>
<dbReference type="GO" id="GO:0031222">
    <property type="term" value="P:arabinan catabolic process"/>
    <property type="evidence" value="ECO:0007669"/>
    <property type="project" value="UniProtKB-UniPathway"/>
</dbReference>
<dbReference type="GO" id="GO:0045493">
    <property type="term" value="P:xylan catabolic process"/>
    <property type="evidence" value="ECO:0007669"/>
    <property type="project" value="UniProtKB-KW"/>
</dbReference>
<dbReference type="CDD" id="cd18831">
    <property type="entry name" value="GH43_AnAbnA-like"/>
    <property type="match status" value="1"/>
</dbReference>
<dbReference type="Gene3D" id="2.115.10.20">
    <property type="entry name" value="Glycosyl hydrolase domain, family 43"/>
    <property type="match status" value="1"/>
</dbReference>
<dbReference type="InterPro" id="IPR050727">
    <property type="entry name" value="GH43_arabinanases"/>
</dbReference>
<dbReference type="InterPro" id="IPR006710">
    <property type="entry name" value="Glyco_hydro_43"/>
</dbReference>
<dbReference type="InterPro" id="IPR016840">
    <property type="entry name" value="Glyco_hydro_43_endo_a_Ara-ase"/>
</dbReference>
<dbReference type="InterPro" id="IPR023296">
    <property type="entry name" value="Glyco_hydro_beta-prop_sf"/>
</dbReference>
<dbReference type="PANTHER" id="PTHR43301">
    <property type="entry name" value="ARABINAN ENDO-1,5-ALPHA-L-ARABINOSIDASE"/>
    <property type="match status" value="1"/>
</dbReference>
<dbReference type="PANTHER" id="PTHR43301:SF7">
    <property type="entry name" value="ARABINAN ENDO-1,5-ALPHA-L-ARABINOSIDASE C"/>
    <property type="match status" value="1"/>
</dbReference>
<dbReference type="Pfam" id="PF04616">
    <property type="entry name" value="Glyco_hydro_43"/>
    <property type="match status" value="1"/>
</dbReference>
<dbReference type="PIRSF" id="PIRSF026534">
    <property type="entry name" value="Endo_alpha-L-arabinosidase"/>
    <property type="match status" value="1"/>
</dbReference>
<dbReference type="SUPFAM" id="SSF75005">
    <property type="entry name" value="Arabinanase/levansucrase/invertase"/>
    <property type="match status" value="1"/>
</dbReference>
<comment type="function">
    <text evidence="1">Endo-1,5-alpha-L-arabinanase involved in degradation of pectin. Its preferred substrate is linear 1,5-alpha-L-arabinan (By similarity).</text>
</comment>
<comment type="catalytic activity">
    <reaction>
        <text>Endohydrolysis of (1-&gt;5)-alpha-arabinofuranosidic linkages in (1-&gt;5)-arabinans.</text>
        <dbReference type="EC" id="3.2.1.99"/>
    </reaction>
</comment>
<comment type="pathway">
    <text>Glycan metabolism; L-arabinan degradation.</text>
</comment>
<comment type="subcellular location">
    <subcellularLocation>
        <location evidence="1">Secreted</location>
    </subcellularLocation>
</comment>
<comment type="similarity">
    <text evidence="4">Belongs to the glycosyl hydrolase 43 family.</text>
</comment>
<comment type="sequence caution" evidence="4">
    <conflict type="erroneous initiation">
        <sequence resource="EMBL-CDS" id="EDP47817"/>
    </conflict>
    <text>Extended N-terminus.</text>
</comment>
<accession>B0YDT3</accession>
<gene>
    <name type="primary">abnC</name>
    <name type="ORF">AFUB_096700</name>
</gene>
<name>ABNC_ASPFC</name>
<evidence type="ECO:0000250" key="1"/>
<evidence type="ECO:0000250" key="2">
    <source>
        <dbReference type="UniProtKB" id="P94522"/>
    </source>
</evidence>
<evidence type="ECO:0000255" key="3"/>
<evidence type="ECO:0000305" key="4"/>
<sequence>MYLYTLILLFLASANVNAYANPGACSGNCWTHDPGLYQRKSDGKYFRFATGGGIHIASADSLEGPWTDDGYVLPSGSIIDLDGKTNLWAPDLHYHDGTYYLYYAVSSLGSQNSAIGVATSKTMEAGSWTDHGTTGIESTPSSPYNTIDANWIAVGGNQYVNFGSYWNNLFQVEMENGLKVKSGATPHQIAYNASGIHRQEAAFMFERNNYFYLTFSGGIALGYNDTWPAPGEEYFIAVCRSTSATGGFVDKNGVSCLNSGGSLLLSSHDFVYGPGGQGILQDSSKGFVLYYHYADTRIGKAVEDYQFGWNQLKWENDWPSV</sequence>
<keyword id="KW-0119">Carbohydrate metabolism</keyword>
<keyword id="KW-0325">Glycoprotein</keyword>
<keyword id="KW-0326">Glycosidase</keyword>
<keyword id="KW-0378">Hydrolase</keyword>
<keyword id="KW-0624">Polysaccharide degradation</keyword>
<keyword id="KW-0964">Secreted</keyword>
<keyword id="KW-0732">Signal</keyword>
<keyword id="KW-0858">Xylan degradation</keyword>
<proteinExistence type="inferred from homology"/>
<organism>
    <name type="scientific">Aspergillus fumigatus (strain CBS 144.89 / FGSC A1163 / CEA10)</name>
    <name type="common">Neosartorya fumigata</name>
    <dbReference type="NCBI Taxonomy" id="451804"/>
    <lineage>
        <taxon>Eukaryota</taxon>
        <taxon>Fungi</taxon>
        <taxon>Dikarya</taxon>
        <taxon>Ascomycota</taxon>
        <taxon>Pezizomycotina</taxon>
        <taxon>Eurotiomycetes</taxon>
        <taxon>Eurotiomycetidae</taxon>
        <taxon>Eurotiales</taxon>
        <taxon>Aspergillaceae</taxon>
        <taxon>Aspergillus</taxon>
        <taxon>Aspergillus subgen. Fumigati</taxon>
    </lineage>
</organism>
<feature type="signal peptide" evidence="3">
    <location>
        <begin position="1"/>
        <end position="18"/>
    </location>
</feature>
<feature type="chain" id="PRO_0000394633" description="Probable arabinan endo-1,5-alpha-L-arabinosidase C">
    <location>
        <begin position="19"/>
        <end position="321"/>
    </location>
</feature>
<feature type="active site" description="Proton acceptor" evidence="2">
    <location>
        <position position="33"/>
    </location>
</feature>
<feature type="active site" description="Proton donor" evidence="2">
    <location>
        <position position="200"/>
    </location>
</feature>
<feature type="site" description="Important for catalytic activity, responsible for pKa modulation of the active site Glu and correct orientation of both the proton donor and substrate" evidence="2">
    <location>
        <position position="148"/>
    </location>
</feature>
<feature type="glycosylation site" description="N-linked (GlcNAc...) asparagine" evidence="3">
    <location>
        <position position="192"/>
    </location>
</feature>
<feature type="glycosylation site" description="N-linked (GlcNAc...) asparagine" evidence="3">
    <location>
        <position position="224"/>
    </location>
</feature>